<feature type="chain" id="PRO_0000385446" description="Uncharacterized protein 68">
    <location>
        <begin position="1"/>
        <end position="196"/>
    </location>
</feature>
<organismHost>
    <name type="scientific">Saccharolobus islandicus</name>
    <name type="common">Sulfolobus islandicus</name>
    <dbReference type="NCBI Taxonomy" id="43080"/>
</organismHost>
<organism>
    <name type="scientific">Sulfolobus islandicus filamentous virus (isolate Iceland/Hveragerdi)</name>
    <name type="common">SIFV</name>
    <dbReference type="NCBI Taxonomy" id="654908"/>
    <lineage>
        <taxon>Viruses</taxon>
        <taxon>Adnaviria</taxon>
        <taxon>Zilligvirae</taxon>
        <taxon>Taleaviricota</taxon>
        <taxon>Tokiviricetes</taxon>
        <taxon>Ligamenvirales</taxon>
        <taxon>Lipothrixviridae</taxon>
        <taxon>Betalipothrixvirus</taxon>
        <taxon>Sulfolobus islandicus filamentous virus</taxon>
    </lineage>
</organism>
<name>Y068_SIFVH</name>
<reference key="1">
    <citation type="journal article" date="2000" name="Virology">
        <title>A novel lipothrixvirus, SIFV, of the extremely thermophilic crenarchaeon Sulfolobus.</title>
        <authorList>
            <person name="Arnold H.P."/>
            <person name="Zillig W."/>
            <person name="Ziese U."/>
            <person name="Holz I."/>
            <person name="Crosby M."/>
            <person name="Utterback T."/>
            <person name="Weidmann J.F."/>
            <person name="Umayam L.A."/>
            <person name="Teffera K."/>
            <person name="Kristjanson J.K."/>
            <person name="Klenk H.P."/>
            <person name="Nelson K.E."/>
            <person name="Fraser C.M."/>
        </authorList>
    </citation>
    <scope>NUCLEOTIDE SEQUENCE [GENOMIC DNA]</scope>
</reference>
<protein>
    <recommendedName>
        <fullName>Uncharacterized protein 68</fullName>
    </recommendedName>
</protein>
<keyword id="KW-1185">Reference proteome</keyword>
<proteinExistence type="predicted"/>
<dbReference type="EMBL" id="AF440571">
    <property type="protein sequence ID" value="AAL27777.1"/>
    <property type="molecule type" value="Genomic_DNA"/>
</dbReference>
<dbReference type="RefSeq" id="NP_445731.1">
    <property type="nucleotide sequence ID" value="NC_003214.2"/>
</dbReference>
<dbReference type="GeneID" id="922335"/>
<dbReference type="KEGG" id="vg:922335"/>
<dbReference type="Proteomes" id="UP000007017">
    <property type="component" value="Segment"/>
</dbReference>
<sequence length="196" mass="22570">MFAELYIMSVESKHYASGTIYTPDGIQQFNGIFDDFDDVFNIKPTFATRIHCSHDEYCIDNGKTSFYYLTYKDIEDLKRMLTFMSGDSSAYLVYVPSDVIKELGINHSSSEITFSDVSIPRLEYIPCKFLGNIPTYIKLIGNTVYVNGVNVNMTVSDPDQLKELVNEIFRIYIIKYYKGLLTWSLILKMWCGIKIS</sequence>
<accession>Q914G4</accession>
<gene>
    <name type="primary">SIFV0068</name>
</gene>